<dbReference type="EMBL" id="AF087469">
    <property type="protein sequence ID" value="AAC64106.1"/>
    <property type="molecule type" value="mRNA"/>
</dbReference>
<dbReference type="CCDS" id="CCDS38505.1"/>
<dbReference type="RefSeq" id="NP_001397502.1">
    <property type="nucleotide sequence ID" value="NM_001410573.1"/>
</dbReference>
<dbReference type="RefSeq" id="NP_001397503.1">
    <property type="nucleotide sequence ID" value="NM_001410574.1"/>
</dbReference>
<dbReference type="RefSeq" id="NP_001397504.1">
    <property type="nucleotide sequence ID" value="NM_001410575.1"/>
</dbReference>
<dbReference type="RefSeq" id="NP_001397505.1">
    <property type="nucleotide sequence ID" value="NM_001410576.1"/>
</dbReference>
<dbReference type="RefSeq" id="NP_035442.1">
    <property type="nucleotide sequence ID" value="NM_011312.3"/>
</dbReference>
<dbReference type="RefSeq" id="XP_006501242.1">
    <property type="nucleotide sequence ID" value="XM_006501179.1"/>
</dbReference>
<dbReference type="RefSeq" id="XP_006501243.1">
    <property type="nucleotide sequence ID" value="XM_006501180.2"/>
</dbReference>
<dbReference type="RefSeq" id="XP_006501244.1">
    <property type="nucleotide sequence ID" value="XM_006501181.2"/>
</dbReference>
<dbReference type="RefSeq" id="XP_036018862.1">
    <property type="nucleotide sequence ID" value="XM_036162969.1"/>
</dbReference>
<dbReference type="RefSeq" id="XP_036018863.1">
    <property type="nucleotide sequence ID" value="XM_036162970.1"/>
</dbReference>
<dbReference type="SMR" id="P63084"/>
<dbReference type="FunCoup" id="P63084">
    <property type="interactions" value="38"/>
</dbReference>
<dbReference type="STRING" id="10090.ENSMUSP00000102952"/>
<dbReference type="PhosphoSitePlus" id="P63084"/>
<dbReference type="PaxDb" id="10090-ENSMUSP00000102952"/>
<dbReference type="PeptideAtlas" id="P63084"/>
<dbReference type="ProteomicsDB" id="256554"/>
<dbReference type="ABCD" id="P63084">
    <property type="antibodies" value="1 sequenced antibody"/>
</dbReference>
<dbReference type="Antibodypedia" id="34125">
    <property type="antibodies" value="288 antibodies from 30 providers"/>
</dbReference>
<dbReference type="DNASU" id="20199"/>
<dbReference type="Ensembl" id="ENSMUST00000001049.5">
    <property type="protein sequence ID" value="ENSMUSP00000001049.5"/>
    <property type="gene ID" value="ENSMUSG00000001023.11"/>
</dbReference>
<dbReference type="Ensembl" id="ENSMUST00000107329.8">
    <property type="protein sequence ID" value="ENSMUSP00000102952.2"/>
    <property type="gene ID" value="ENSMUSG00000001023.11"/>
</dbReference>
<dbReference type="GeneID" id="20199"/>
<dbReference type="KEGG" id="mmu:20199"/>
<dbReference type="UCSC" id="uc008qda.1">
    <property type="organism name" value="mouse"/>
</dbReference>
<dbReference type="AGR" id="MGI:1338915"/>
<dbReference type="CTD" id="6276"/>
<dbReference type="MGI" id="MGI:1338915">
    <property type="gene designation" value="S100a5"/>
</dbReference>
<dbReference type="VEuPathDB" id="HostDB:ENSMUSG00000001023"/>
<dbReference type="eggNOG" id="ENOG502S40V">
    <property type="taxonomic scope" value="Eukaryota"/>
</dbReference>
<dbReference type="GeneTree" id="ENSGT00940000161986"/>
<dbReference type="HOGENOM" id="CLU_138624_2_0_1"/>
<dbReference type="InParanoid" id="P63084"/>
<dbReference type="OMA" id="CMSYNDF"/>
<dbReference type="OrthoDB" id="8881129at2759"/>
<dbReference type="PhylomeDB" id="P63084"/>
<dbReference type="TreeFam" id="TF332727"/>
<dbReference type="BioGRID-ORCS" id="20199">
    <property type="hits" value="0 hits in 80 CRISPR screens"/>
</dbReference>
<dbReference type="PRO" id="PR:P63084"/>
<dbReference type="Proteomes" id="UP000000589">
    <property type="component" value="Chromosome 3"/>
</dbReference>
<dbReference type="RNAct" id="P63084">
    <property type="molecule type" value="protein"/>
</dbReference>
<dbReference type="Bgee" id="ENSMUSG00000001023">
    <property type="expression patterns" value="Expressed in olfactory epithelium and 35 other cell types or tissues"/>
</dbReference>
<dbReference type="ExpressionAtlas" id="P63084">
    <property type="expression patterns" value="baseline and differential"/>
</dbReference>
<dbReference type="GO" id="GO:0043025">
    <property type="term" value="C:neuronal cell body"/>
    <property type="evidence" value="ECO:0000314"/>
    <property type="project" value="MGI"/>
</dbReference>
<dbReference type="GO" id="GO:0005634">
    <property type="term" value="C:nucleus"/>
    <property type="evidence" value="ECO:0007669"/>
    <property type="project" value="Ensembl"/>
</dbReference>
<dbReference type="GO" id="GO:0005509">
    <property type="term" value="F:calcium ion binding"/>
    <property type="evidence" value="ECO:0000250"/>
    <property type="project" value="UniProtKB"/>
</dbReference>
<dbReference type="GO" id="GO:0005507">
    <property type="term" value="F:copper ion binding"/>
    <property type="evidence" value="ECO:0000250"/>
    <property type="project" value="UniProtKB"/>
</dbReference>
<dbReference type="GO" id="GO:0042803">
    <property type="term" value="F:protein homodimerization activity"/>
    <property type="evidence" value="ECO:0007669"/>
    <property type="project" value="Ensembl"/>
</dbReference>
<dbReference type="GO" id="GO:0008270">
    <property type="term" value="F:zinc ion binding"/>
    <property type="evidence" value="ECO:0000250"/>
    <property type="project" value="UniProtKB"/>
</dbReference>
<dbReference type="CDD" id="cd00213">
    <property type="entry name" value="S-100"/>
    <property type="match status" value="1"/>
</dbReference>
<dbReference type="FunFam" id="1.10.238.10:FF:000044">
    <property type="entry name" value="Protein S100"/>
    <property type="match status" value="1"/>
</dbReference>
<dbReference type="Gene3D" id="1.10.238.10">
    <property type="entry name" value="EF-hand"/>
    <property type="match status" value="1"/>
</dbReference>
<dbReference type="InterPro" id="IPR011992">
    <property type="entry name" value="EF-hand-dom_pair"/>
</dbReference>
<dbReference type="InterPro" id="IPR018247">
    <property type="entry name" value="EF_Hand_1_Ca_BS"/>
</dbReference>
<dbReference type="InterPro" id="IPR002048">
    <property type="entry name" value="EF_hand_dom"/>
</dbReference>
<dbReference type="InterPro" id="IPR034325">
    <property type="entry name" value="S-100_dom"/>
</dbReference>
<dbReference type="InterPro" id="IPR001751">
    <property type="entry name" value="S100/CaBP7/8-like_CS"/>
</dbReference>
<dbReference type="InterPro" id="IPR013787">
    <property type="entry name" value="S100_Ca-bd_sub"/>
</dbReference>
<dbReference type="PANTHER" id="PTHR11639:SF65">
    <property type="entry name" value="PROTEIN S100-A5"/>
    <property type="match status" value="1"/>
</dbReference>
<dbReference type="PANTHER" id="PTHR11639">
    <property type="entry name" value="S100 CALCIUM-BINDING PROTEIN"/>
    <property type="match status" value="1"/>
</dbReference>
<dbReference type="Pfam" id="PF01023">
    <property type="entry name" value="S_100"/>
    <property type="match status" value="1"/>
</dbReference>
<dbReference type="SMART" id="SM00054">
    <property type="entry name" value="EFh"/>
    <property type="match status" value="1"/>
</dbReference>
<dbReference type="SMART" id="SM01394">
    <property type="entry name" value="S_100"/>
    <property type="match status" value="1"/>
</dbReference>
<dbReference type="SUPFAM" id="SSF47473">
    <property type="entry name" value="EF-hand"/>
    <property type="match status" value="1"/>
</dbReference>
<dbReference type="PROSITE" id="PS00018">
    <property type="entry name" value="EF_HAND_1"/>
    <property type="match status" value="1"/>
</dbReference>
<dbReference type="PROSITE" id="PS50222">
    <property type="entry name" value="EF_HAND_2"/>
    <property type="match status" value="1"/>
</dbReference>
<dbReference type="PROSITE" id="PS00303">
    <property type="entry name" value="S100_CABP"/>
    <property type="match status" value="1"/>
</dbReference>
<accession>P63084</accession>
<accession>O88945</accession>
<accession>P82540</accession>
<protein>
    <recommendedName>
        <fullName>Protein S100-A5</fullName>
    </recommendedName>
    <alternativeName>
        <fullName>Protein S-100D</fullName>
    </alternativeName>
    <alternativeName>
        <fullName>S100 calcium-binding protein A5</fullName>
    </alternativeName>
</protein>
<sequence>METPLEKALTTMVTTFHKYSGREGSKLTLSRKELKELIKTELSLAEKMKESSIDNLMKSLDKNSDQEIDFKEYSVFLTTLCMAYNDFFLEDNK</sequence>
<gene>
    <name type="primary">S100a5</name>
    <name type="synonym">S100d</name>
</gene>
<proteinExistence type="inferred from homology"/>
<name>S10A5_MOUSE</name>
<organism>
    <name type="scientific">Mus musculus</name>
    <name type="common">Mouse</name>
    <dbReference type="NCBI Taxonomy" id="10090"/>
    <lineage>
        <taxon>Eukaryota</taxon>
        <taxon>Metazoa</taxon>
        <taxon>Chordata</taxon>
        <taxon>Craniata</taxon>
        <taxon>Vertebrata</taxon>
        <taxon>Euteleostomi</taxon>
        <taxon>Mammalia</taxon>
        <taxon>Eutheria</taxon>
        <taxon>Euarchontoglires</taxon>
        <taxon>Glires</taxon>
        <taxon>Rodentia</taxon>
        <taxon>Myomorpha</taxon>
        <taxon>Muroidea</taxon>
        <taxon>Muridae</taxon>
        <taxon>Murinae</taxon>
        <taxon>Mus</taxon>
        <taxon>Mus</taxon>
    </lineage>
</organism>
<keyword id="KW-0106">Calcium</keyword>
<keyword id="KW-0186">Copper</keyword>
<keyword id="KW-0479">Metal-binding</keyword>
<keyword id="KW-1185">Reference proteome</keyword>
<keyword id="KW-0677">Repeat</keyword>
<keyword id="KW-0862">Zinc</keyword>
<evidence type="ECO:0000250" key="1"/>
<evidence type="ECO:0000255" key="2">
    <source>
        <dbReference type="PROSITE-ProRule" id="PRU00448"/>
    </source>
</evidence>
<evidence type="ECO:0000305" key="3"/>
<feature type="chain" id="PRO_0000143981" description="Protein S100-A5">
    <location>
        <begin position="1"/>
        <end position="93"/>
    </location>
</feature>
<feature type="domain" description="EF-hand 1" evidence="3">
    <location>
        <begin position="12"/>
        <end position="47"/>
    </location>
</feature>
<feature type="domain" description="EF-hand 2" evidence="2">
    <location>
        <begin position="48"/>
        <end position="83"/>
    </location>
</feature>
<feature type="binding site" evidence="3">
    <location>
        <position position="28"/>
    </location>
    <ligand>
        <name>Ca(2+)</name>
        <dbReference type="ChEBI" id="CHEBI:29108"/>
        <label>1</label>
        <note>low affinity</note>
    </ligand>
</feature>
<feature type="binding site" evidence="3">
    <location>
        <position position="33"/>
    </location>
    <ligand>
        <name>Ca(2+)</name>
        <dbReference type="ChEBI" id="CHEBI:29108"/>
        <label>1</label>
        <note>low affinity</note>
    </ligand>
</feature>
<feature type="binding site" evidence="2">
    <location>
        <position position="61"/>
    </location>
    <ligand>
        <name>Ca(2+)</name>
        <dbReference type="ChEBI" id="CHEBI:29108"/>
        <label>2</label>
        <note>high affinity</note>
    </ligand>
</feature>
<feature type="binding site" evidence="2">
    <location>
        <position position="63"/>
    </location>
    <ligand>
        <name>Ca(2+)</name>
        <dbReference type="ChEBI" id="CHEBI:29108"/>
        <label>2</label>
        <note>high affinity</note>
    </ligand>
</feature>
<feature type="binding site" evidence="2">
    <location>
        <position position="65"/>
    </location>
    <ligand>
        <name>Ca(2+)</name>
        <dbReference type="ChEBI" id="CHEBI:29108"/>
        <label>2</label>
        <note>high affinity</note>
    </ligand>
</feature>
<feature type="binding site" evidence="2">
    <location>
        <position position="67"/>
    </location>
    <ligand>
        <name>Ca(2+)</name>
        <dbReference type="ChEBI" id="CHEBI:29108"/>
        <label>2</label>
        <note>high affinity</note>
    </ligand>
</feature>
<feature type="binding site" evidence="2">
    <location>
        <position position="72"/>
    </location>
    <ligand>
        <name>Ca(2+)</name>
        <dbReference type="ChEBI" id="CHEBI:29108"/>
        <label>2</label>
        <note>high affinity</note>
    </ligand>
</feature>
<comment type="function">
    <text evidence="1">Binds calcium, zinc and copper. One subunit can simultaneously bind 2 calcium ions or 2 copper ions plus 1 zinc ion. Calcium and copper ions compete for the same binding sites (By similarity).</text>
</comment>
<comment type="subunit">
    <text evidence="1">Homodimer.</text>
</comment>
<comment type="similarity">
    <text evidence="3">Belongs to the S-100 family.</text>
</comment>
<reference key="1">
    <citation type="journal article" date="1998" name="Biochim. Biophys. Acta">
        <title>Clustered organization of S100 genes in human and mouse.</title>
        <authorList>
            <person name="Ridinger K."/>
            <person name="Ilg E.C."/>
            <person name="Niggli F.K."/>
            <person name="Heizmann C.W."/>
            <person name="Schaefer B.W."/>
        </authorList>
    </citation>
    <scope>NUCLEOTIDE SEQUENCE [MRNA]</scope>
</reference>